<evidence type="ECO:0000250" key="1"/>
<evidence type="ECO:0000255" key="2"/>
<evidence type="ECO:0000305" key="3"/>
<feature type="chain" id="PRO_0000118147" description="NADH-ubiquinone oxidoreductase chain 5">
    <location>
        <begin position="1"/>
        <end position="686"/>
    </location>
</feature>
<feature type="transmembrane region" description="Helical" evidence="2">
    <location>
        <begin position="3"/>
        <end position="23"/>
    </location>
</feature>
<feature type="transmembrane region" description="Helical" evidence="2">
    <location>
        <begin position="40"/>
        <end position="60"/>
    </location>
</feature>
<feature type="transmembrane region" description="Helical" evidence="2">
    <location>
        <begin position="101"/>
        <end position="121"/>
    </location>
</feature>
<feature type="transmembrane region" description="Helical" evidence="2">
    <location>
        <begin position="139"/>
        <end position="159"/>
    </location>
</feature>
<feature type="transmembrane region" description="Helical" evidence="2">
    <location>
        <begin position="160"/>
        <end position="180"/>
    </location>
</feature>
<feature type="transmembrane region" description="Helical" evidence="2">
    <location>
        <begin position="198"/>
        <end position="218"/>
    </location>
</feature>
<feature type="transmembrane region" description="Helical" evidence="2">
    <location>
        <begin position="222"/>
        <end position="242"/>
    </location>
</feature>
<feature type="transmembrane region" description="Helical" evidence="2">
    <location>
        <begin position="261"/>
        <end position="281"/>
    </location>
</feature>
<feature type="transmembrane region" description="Helical" evidence="2">
    <location>
        <begin position="293"/>
        <end position="313"/>
    </location>
</feature>
<feature type="transmembrane region" description="Helical" evidence="2">
    <location>
        <begin position="321"/>
        <end position="341"/>
    </location>
</feature>
<feature type="transmembrane region" description="Helical" evidence="2">
    <location>
        <begin position="350"/>
        <end position="370"/>
    </location>
</feature>
<feature type="transmembrane region" description="Helical" evidence="2">
    <location>
        <begin position="382"/>
        <end position="402"/>
    </location>
</feature>
<feature type="transmembrane region" description="Helical" evidence="2">
    <location>
        <begin position="432"/>
        <end position="452"/>
    </location>
</feature>
<feature type="transmembrane region" description="Helical" evidence="2">
    <location>
        <begin position="472"/>
        <end position="492"/>
    </location>
</feature>
<feature type="transmembrane region" description="Helical" evidence="2">
    <location>
        <begin position="526"/>
        <end position="546"/>
    </location>
</feature>
<feature type="transmembrane region" description="Helical" evidence="2">
    <location>
        <begin position="635"/>
        <end position="655"/>
    </location>
</feature>
<feature type="transmembrane region" description="Helical" evidence="2">
    <location>
        <begin position="665"/>
        <end position="685"/>
    </location>
</feature>
<comment type="function">
    <text evidence="1">Core subunit of the mitochondrial membrane respiratory chain NADH dehydrogenase (Complex I) that is believed to belong to the minimal assembly required for catalysis. Complex I functions in the transfer of electrons from NADH to the respiratory chain. The immediate electron acceptor for the enzyme is believed to be ubiquinone (By similarity).</text>
</comment>
<comment type="catalytic activity">
    <reaction>
        <text>a ubiquinone + NADH + 5 H(+)(in) = a ubiquinol + NAD(+) + 4 H(+)(out)</text>
        <dbReference type="Rhea" id="RHEA:29091"/>
        <dbReference type="Rhea" id="RHEA-COMP:9565"/>
        <dbReference type="Rhea" id="RHEA-COMP:9566"/>
        <dbReference type="ChEBI" id="CHEBI:15378"/>
        <dbReference type="ChEBI" id="CHEBI:16389"/>
        <dbReference type="ChEBI" id="CHEBI:17976"/>
        <dbReference type="ChEBI" id="CHEBI:57540"/>
        <dbReference type="ChEBI" id="CHEBI:57945"/>
        <dbReference type="EC" id="7.1.1.2"/>
    </reaction>
</comment>
<comment type="subcellular location">
    <subcellularLocation>
        <location evidence="1">Mitochondrion inner membrane</location>
        <topology evidence="1">Multi-pass membrane protein</topology>
    </subcellularLocation>
</comment>
<comment type="similarity">
    <text evidence="3">Belongs to the complex I subunit 5 family.</text>
</comment>
<organism>
    <name type="scientific">Schizophyllum commune</name>
    <name type="common">Split gill fungus</name>
    <dbReference type="NCBI Taxonomy" id="5334"/>
    <lineage>
        <taxon>Eukaryota</taxon>
        <taxon>Fungi</taxon>
        <taxon>Dikarya</taxon>
        <taxon>Basidiomycota</taxon>
        <taxon>Agaricomycotina</taxon>
        <taxon>Agaricomycetes</taxon>
        <taxon>Agaricomycetidae</taxon>
        <taxon>Agaricales</taxon>
        <taxon>Schizophyllaceae</taxon>
        <taxon>Schizophyllum</taxon>
    </lineage>
</organism>
<reference key="1">
    <citation type="journal article" date="1995" name="Can. J. Bot.">
        <title>A robust fungal phylogeny using the mitochondrially encoded nad5 protein sequence.</title>
        <authorList>
            <person name="Paquin B."/>
            <person name="Roewer I."/>
            <person name="Wang Z."/>
            <person name="Lang B.F."/>
        </authorList>
    </citation>
    <scope>NUCLEOTIDE SEQUENCE [GENOMIC DNA]</scope>
    <source>
        <strain>ATCC 44201 / CBS 340.81 / UVM 4-40 / 4-40</strain>
    </source>
</reference>
<keyword id="KW-0249">Electron transport</keyword>
<keyword id="KW-0472">Membrane</keyword>
<keyword id="KW-0496">Mitochondrion</keyword>
<keyword id="KW-0999">Mitochondrion inner membrane</keyword>
<keyword id="KW-0520">NAD</keyword>
<keyword id="KW-0679">Respiratory chain</keyword>
<keyword id="KW-1278">Translocase</keyword>
<keyword id="KW-0812">Transmembrane</keyword>
<keyword id="KW-1133">Transmembrane helix</keyword>
<keyword id="KW-0813">Transport</keyword>
<keyword id="KW-0830">Ubiquinone</keyword>
<proteinExistence type="inferred from homology"/>
<name>NU5M_SCHCO</name>
<accession>P50368</accession>
<dbReference type="EC" id="7.1.1.2"/>
<dbReference type="EMBL" id="U17012">
    <property type="protein sequence ID" value="AAA99063.1"/>
    <property type="molecule type" value="Genomic_DNA"/>
</dbReference>
<dbReference type="PIR" id="T14203">
    <property type="entry name" value="T14203"/>
</dbReference>
<dbReference type="SMR" id="P50368"/>
<dbReference type="GO" id="GO:0005743">
    <property type="term" value="C:mitochondrial inner membrane"/>
    <property type="evidence" value="ECO:0007669"/>
    <property type="project" value="UniProtKB-SubCell"/>
</dbReference>
<dbReference type="GO" id="GO:0008137">
    <property type="term" value="F:NADH dehydrogenase (ubiquinone) activity"/>
    <property type="evidence" value="ECO:0007669"/>
    <property type="project" value="UniProtKB-EC"/>
</dbReference>
<dbReference type="GO" id="GO:0042773">
    <property type="term" value="P:ATP synthesis coupled electron transport"/>
    <property type="evidence" value="ECO:0007669"/>
    <property type="project" value="InterPro"/>
</dbReference>
<dbReference type="GO" id="GO:0015990">
    <property type="term" value="P:electron transport coupled proton transport"/>
    <property type="evidence" value="ECO:0007669"/>
    <property type="project" value="TreeGrafter"/>
</dbReference>
<dbReference type="Gene3D" id="1.20.5.2700">
    <property type="match status" value="1"/>
</dbReference>
<dbReference type="InterPro" id="IPR010934">
    <property type="entry name" value="NADH_DH_su5_C"/>
</dbReference>
<dbReference type="InterPro" id="IPR018393">
    <property type="entry name" value="NADHpl_OxRdtase_5_subgr"/>
</dbReference>
<dbReference type="InterPro" id="IPR001750">
    <property type="entry name" value="ND/Mrp_TM"/>
</dbReference>
<dbReference type="InterPro" id="IPR003945">
    <property type="entry name" value="NU5C-like"/>
</dbReference>
<dbReference type="InterPro" id="IPR001516">
    <property type="entry name" value="Proton_antipo_N"/>
</dbReference>
<dbReference type="NCBIfam" id="TIGR01974">
    <property type="entry name" value="NDH_I_L"/>
    <property type="match status" value="1"/>
</dbReference>
<dbReference type="NCBIfam" id="NF005141">
    <property type="entry name" value="PRK06590.1"/>
    <property type="match status" value="1"/>
</dbReference>
<dbReference type="PANTHER" id="PTHR42829">
    <property type="entry name" value="NADH-UBIQUINONE OXIDOREDUCTASE CHAIN 5"/>
    <property type="match status" value="1"/>
</dbReference>
<dbReference type="PANTHER" id="PTHR42829:SF2">
    <property type="entry name" value="NADH-UBIQUINONE OXIDOREDUCTASE CHAIN 5"/>
    <property type="match status" value="1"/>
</dbReference>
<dbReference type="Pfam" id="PF06455">
    <property type="entry name" value="NADH5_C"/>
    <property type="match status" value="1"/>
</dbReference>
<dbReference type="Pfam" id="PF00361">
    <property type="entry name" value="Proton_antipo_M"/>
    <property type="match status" value="1"/>
</dbReference>
<dbReference type="Pfam" id="PF00662">
    <property type="entry name" value="Proton_antipo_N"/>
    <property type="match status" value="1"/>
</dbReference>
<dbReference type="PRINTS" id="PR01434">
    <property type="entry name" value="NADHDHGNASE5"/>
</dbReference>
<geneLocation type="mitochondrion"/>
<sequence length="686" mass="76186">MNLIILFLPFVGAFISGFLGRFVGTTGAQILTCACILTSALLSLYYWLSINELIIGLFSFEGDQVYFTDWNFLSNNTFINLGTWVDSEYIKISWEFTFNEITLPFLFTVLFISFLIHLFSVNYMANDPHIQRFFSYLSLFTFFMAILVTGANYFVLFVGWEGIGVVSYLLINFWFTRIQANKAAILAFNTNRIGDMALSIAYFVMLPAFGSADFSTVFSLPAYINQTTITIIGFLLLVGAMAKSSQIPLHNWLPGSMEGPTPVSALIHAATLVTAGSYLLIRSSPILEYAPTVLLVITIIGASTAFFAATCGLVQNDIKRIIAFSTISQLGYMVMAIGLSQYNVALAHTLFHAYFKALLFLGAGSVIHAFGDIQDVRKMGGLINFLPFTYAVMLVGTLSLLATPFLTGFYSKDLIIELAYGQYSFSGTYAYILGSVTAGLTAFYSFRLISLVFLTKPNGNKQNYLNSHEASITVIIPLAVLAIFSIFFGYVTSDLFVGIGSDFFANTIFIHPNNISLVEAEFSMSLIFKLLPTIFSLAGTLFALYLYNYNPHFIDSLVENNLGKKVYGFLNGKYYFDVIYNNYIISKGLQFGYNISKEIDRGVIELIGPYGMSNVLYSTSANIAKLDTGIITTYALYITLGLLSLLFIVFAPMLVNTTINDEFRLIILFIFTLIVNSAYLNKKLSK</sequence>
<gene>
    <name type="primary">ND5</name>
    <name type="synonym">NAD5</name>
</gene>
<protein>
    <recommendedName>
        <fullName>NADH-ubiquinone oxidoreductase chain 5</fullName>
        <ecNumber>7.1.1.2</ecNumber>
    </recommendedName>
    <alternativeName>
        <fullName>NADH dehydrogenase subunit 5</fullName>
    </alternativeName>
</protein>